<sequence>MTLFPIFADLTGRRVLVVGGGAVAVRKTQALLQAGAEVVVGAPRLDPALAALAEQGGIARLDGGFEPAWLAGAWLVVAATDDRAVNAAVSEAARARRVFCNVVDDAELSSFQVPSVVDRSPLIVAISSSGVAPVLARRLRERIESLFDHSLGQLAALAARYRPRIRAARPDLGQRRRFYDWLLDGPVAARLRQQQPGLAEQELEQALRAPQAAPRGSVVLVGAGPGDPGLLTLKALRALNEADIILYDRLVSEGVLALARRDAERVPVGKLPGEDHDATQARIHALMLAQARAGRRVVRLKGGDAFIFGRGGEELEYLRAHDVPYEVVPGITAALACAAYAGIPLTHRDHAQSVRMVTAHCRADQDTLDWAGLARDQQTLAFYMGVGQLDYVTARLLEHGRAPATPFALIENGSRPEQRVVTGTLAELPEIARRRSVRPPALLVIGEVAALADTLQWFGQHQHGLPGPQALAA</sequence>
<gene>
    <name evidence="1" type="primary">cysG</name>
    <name type="ordered locus">BPP1151</name>
</gene>
<evidence type="ECO:0000255" key="1">
    <source>
        <dbReference type="HAMAP-Rule" id="MF_01646"/>
    </source>
</evidence>
<keyword id="KW-0169">Cobalamin biosynthesis</keyword>
<keyword id="KW-0456">Lyase</keyword>
<keyword id="KW-0489">Methyltransferase</keyword>
<keyword id="KW-0511">Multifunctional enzyme</keyword>
<keyword id="KW-0520">NAD</keyword>
<keyword id="KW-0560">Oxidoreductase</keyword>
<keyword id="KW-0597">Phosphoprotein</keyword>
<keyword id="KW-0627">Porphyrin biosynthesis</keyword>
<keyword id="KW-0949">S-adenosyl-L-methionine</keyword>
<keyword id="KW-0808">Transferase</keyword>
<reference key="1">
    <citation type="journal article" date="2003" name="Nat. Genet.">
        <title>Comparative analysis of the genome sequences of Bordetella pertussis, Bordetella parapertussis and Bordetella bronchiseptica.</title>
        <authorList>
            <person name="Parkhill J."/>
            <person name="Sebaihia M."/>
            <person name="Preston A."/>
            <person name="Murphy L.D."/>
            <person name="Thomson N.R."/>
            <person name="Harris D.E."/>
            <person name="Holden M.T.G."/>
            <person name="Churcher C.M."/>
            <person name="Bentley S.D."/>
            <person name="Mungall K.L."/>
            <person name="Cerdeno-Tarraga A.-M."/>
            <person name="Temple L."/>
            <person name="James K.D."/>
            <person name="Harris B."/>
            <person name="Quail M.A."/>
            <person name="Achtman M."/>
            <person name="Atkin R."/>
            <person name="Baker S."/>
            <person name="Basham D."/>
            <person name="Bason N."/>
            <person name="Cherevach I."/>
            <person name="Chillingworth T."/>
            <person name="Collins M."/>
            <person name="Cronin A."/>
            <person name="Davis P."/>
            <person name="Doggett J."/>
            <person name="Feltwell T."/>
            <person name="Goble A."/>
            <person name="Hamlin N."/>
            <person name="Hauser H."/>
            <person name="Holroyd S."/>
            <person name="Jagels K."/>
            <person name="Leather S."/>
            <person name="Moule S."/>
            <person name="Norberczak H."/>
            <person name="O'Neil S."/>
            <person name="Ormond D."/>
            <person name="Price C."/>
            <person name="Rabbinowitsch E."/>
            <person name="Rutter S."/>
            <person name="Sanders M."/>
            <person name="Saunders D."/>
            <person name="Seeger K."/>
            <person name="Sharp S."/>
            <person name="Simmonds M."/>
            <person name="Skelton J."/>
            <person name="Squares R."/>
            <person name="Squares S."/>
            <person name="Stevens K."/>
            <person name="Unwin L."/>
            <person name="Whitehead S."/>
            <person name="Barrell B.G."/>
            <person name="Maskell D.J."/>
        </authorList>
    </citation>
    <scope>NUCLEOTIDE SEQUENCE [LARGE SCALE GENOMIC DNA]</scope>
    <source>
        <strain>12822 / ATCC BAA-587 / NCTC 13253</strain>
    </source>
</reference>
<protein>
    <recommendedName>
        <fullName evidence="1">Siroheme synthase</fullName>
    </recommendedName>
    <domain>
        <recommendedName>
            <fullName evidence="1">Uroporphyrinogen-III C-methyltransferase</fullName>
            <shortName evidence="1">Urogen III methylase</shortName>
            <ecNumber evidence="1">2.1.1.107</ecNumber>
        </recommendedName>
        <alternativeName>
            <fullName evidence="1">SUMT</fullName>
        </alternativeName>
        <alternativeName>
            <fullName evidence="1">Uroporphyrinogen III methylase</fullName>
            <shortName evidence="1">UROM</shortName>
        </alternativeName>
    </domain>
    <domain>
        <recommendedName>
            <fullName evidence="1">Precorrin-2 dehydrogenase</fullName>
            <ecNumber evidence="1">1.3.1.76</ecNumber>
        </recommendedName>
    </domain>
    <domain>
        <recommendedName>
            <fullName evidence="1">Sirohydrochlorin ferrochelatase</fullName>
            <ecNumber evidence="1">4.99.1.4</ecNumber>
        </recommendedName>
    </domain>
</protein>
<dbReference type="EC" id="2.1.1.107" evidence="1"/>
<dbReference type="EC" id="1.3.1.76" evidence="1"/>
<dbReference type="EC" id="4.99.1.4" evidence="1"/>
<dbReference type="EMBL" id="BX640426">
    <property type="protein sequence ID" value="CAE36452.1"/>
    <property type="molecule type" value="Genomic_DNA"/>
</dbReference>
<dbReference type="RefSeq" id="WP_003809429.1">
    <property type="nucleotide sequence ID" value="NC_002928.3"/>
</dbReference>
<dbReference type="SMR" id="Q7WB57"/>
<dbReference type="GeneID" id="93202906"/>
<dbReference type="KEGG" id="bpa:BPP1151"/>
<dbReference type="HOGENOM" id="CLU_011276_2_0_4"/>
<dbReference type="UniPathway" id="UPA00148">
    <property type="reaction ID" value="UER00211"/>
</dbReference>
<dbReference type="UniPathway" id="UPA00148">
    <property type="reaction ID" value="UER00222"/>
</dbReference>
<dbReference type="UniPathway" id="UPA00262">
    <property type="reaction ID" value="UER00211"/>
</dbReference>
<dbReference type="UniPathway" id="UPA00262">
    <property type="reaction ID" value="UER00222"/>
</dbReference>
<dbReference type="UniPathway" id="UPA00262">
    <property type="reaction ID" value="UER00376"/>
</dbReference>
<dbReference type="Proteomes" id="UP000001421">
    <property type="component" value="Chromosome"/>
</dbReference>
<dbReference type="GO" id="GO:0051287">
    <property type="term" value="F:NAD binding"/>
    <property type="evidence" value="ECO:0007669"/>
    <property type="project" value="InterPro"/>
</dbReference>
<dbReference type="GO" id="GO:0043115">
    <property type="term" value="F:precorrin-2 dehydrogenase activity"/>
    <property type="evidence" value="ECO:0007669"/>
    <property type="project" value="UniProtKB-UniRule"/>
</dbReference>
<dbReference type="GO" id="GO:0051266">
    <property type="term" value="F:sirohydrochlorin ferrochelatase activity"/>
    <property type="evidence" value="ECO:0007669"/>
    <property type="project" value="UniProtKB-EC"/>
</dbReference>
<dbReference type="GO" id="GO:0004851">
    <property type="term" value="F:uroporphyrin-III C-methyltransferase activity"/>
    <property type="evidence" value="ECO:0007669"/>
    <property type="project" value="UniProtKB-UniRule"/>
</dbReference>
<dbReference type="GO" id="GO:0009236">
    <property type="term" value="P:cobalamin biosynthetic process"/>
    <property type="evidence" value="ECO:0007669"/>
    <property type="project" value="UniProtKB-UniRule"/>
</dbReference>
<dbReference type="GO" id="GO:0032259">
    <property type="term" value="P:methylation"/>
    <property type="evidence" value="ECO:0007669"/>
    <property type="project" value="UniProtKB-KW"/>
</dbReference>
<dbReference type="GO" id="GO:0019354">
    <property type="term" value="P:siroheme biosynthetic process"/>
    <property type="evidence" value="ECO:0007669"/>
    <property type="project" value="UniProtKB-UniRule"/>
</dbReference>
<dbReference type="CDD" id="cd11642">
    <property type="entry name" value="SUMT"/>
    <property type="match status" value="1"/>
</dbReference>
<dbReference type="FunFam" id="3.30.950.10:FF:000001">
    <property type="entry name" value="Siroheme synthase"/>
    <property type="match status" value="1"/>
</dbReference>
<dbReference type="FunFam" id="3.40.1010.10:FF:000001">
    <property type="entry name" value="Siroheme synthase"/>
    <property type="match status" value="1"/>
</dbReference>
<dbReference type="Gene3D" id="3.40.1010.10">
    <property type="entry name" value="Cobalt-precorrin-4 Transmethylase, Domain 1"/>
    <property type="match status" value="1"/>
</dbReference>
<dbReference type="Gene3D" id="3.30.950.10">
    <property type="entry name" value="Methyltransferase, Cobalt-precorrin-4 Transmethylase, Domain 2"/>
    <property type="match status" value="1"/>
</dbReference>
<dbReference type="Gene3D" id="3.40.50.720">
    <property type="entry name" value="NAD(P)-binding Rossmann-like Domain"/>
    <property type="match status" value="1"/>
</dbReference>
<dbReference type="Gene3D" id="1.10.8.210">
    <property type="entry name" value="Sirohaem synthase, dimerisation domain"/>
    <property type="match status" value="1"/>
</dbReference>
<dbReference type="Gene3D" id="3.30.160.110">
    <property type="entry name" value="Siroheme synthase, domain 2"/>
    <property type="match status" value="1"/>
</dbReference>
<dbReference type="HAMAP" id="MF_01646">
    <property type="entry name" value="Siroheme_synth"/>
    <property type="match status" value="1"/>
</dbReference>
<dbReference type="InterPro" id="IPR000878">
    <property type="entry name" value="4pyrrol_Mease"/>
</dbReference>
<dbReference type="InterPro" id="IPR035996">
    <property type="entry name" value="4pyrrol_Methylase_sf"/>
</dbReference>
<dbReference type="InterPro" id="IPR014777">
    <property type="entry name" value="4pyrrole_Mease_sub1"/>
</dbReference>
<dbReference type="InterPro" id="IPR014776">
    <property type="entry name" value="4pyrrole_Mease_sub2"/>
</dbReference>
<dbReference type="InterPro" id="IPR006366">
    <property type="entry name" value="CobA/CysG_C"/>
</dbReference>
<dbReference type="InterPro" id="IPR036291">
    <property type="entry name" value="NAD(P)-bd_dom_sf"/>
</dbReference>
<dbReference type="InterPro" id="IPR050161">
    <property type="entry name" value="Siro_Cobalamin_biosynth"/>
</dbReference>
<dbReference type="InterPro" id="IPR037115">
    <property type="entry name" value="Sirohaem_synt_dimer_dom_sf"/>
</dbReference>
<dbReference type="InterPro" id="IPR012409">
    <property type="entry name" value="Sirohaem_synth"/>
</dbReference>
<dbReference type="InterPro" id="IPR028281">
    <property type="entry name" value="Sirohaem_synthase_central"/>
</dbReference>
<dbReference type="InterPro" id="IPR019478">
    <property type="entry name" value="Sirohaem_synthase_dimer_dom"/>
</dbReference>
<dbReference type="InterPro" id="IPR006367">
    <property type="entry name" value="Sirohaem_synthase_N"/>
</dbReference>
<dbReference type="InterPro" id="IPR003043">
    <property type="entry name" value="Uropor_MeTrfase_CS"/>
</dbReference>
<dbReference type="NCBIfam" id="TIGR01469">
    <property type="entry name" value="cobA_cysG_Cterm"/>
    <property type="match status" value="1"/>
</dbReference>
<dbReference type="NCBIfam" id="TIGR01470">
    <property type="entry name" value="cysG_Nterm"/>
    <property type="match status" value="1"/>
</dbReference>
<dbReference type="NCBIfam" id="NF004790">
    <property type="entry name" value="PRK06136.1"/>
    <property type="match status" value="1"/>
</dbReference>
<dbReference type="NCBIfam" id="NF007922">
    <property type="entry name" value="PRK10637.1"/>
    <property type="match status" value="1"/>
</dbReference>
<dbReference type="PANTHER" id="PTHR45790:SF1">
    <property type="entry name" value="SIROHEME SYNTHASE"/>
    <property type="match status" value="1"/>
</dbReference>
<dbReference type="PANTHER" id="PTHR45790">
    <property type="entry name" value="SIROHEME SYNTHASE-RELATED"/>
    <property type="match status" value="1"/>
</dbReference>
<dbReference type="Pfam" id="PF10414">
    <property type="entry name" value="CysG_dimeriser"/>
    <property type="match status" value="1"/>
</dbReference>
<dbReference type="Pfam" id="PF13241">
    <property type="entry name" value="NAD_binding_7"/>
    <property type="match status" value="1"/>
</dbReference>
<dbReference type="Pfam" id="PF14824">
    <property type="entry name" value="Sirohm_synth_M"/>
    <property type="match status" value="1"/>
</dbReference>
<dbReference type="Pfam" id="PF00590">
    <property type="entry name" value="TP_methylase"/>
    <property type="match status" value="1"/>
</dbReference>
<dbReference type="PIRSF" id="PIRSF036426">
    <property type="entry name" value="Sirohaem_synth"/>
    <property type="match status" value="1"/>
</dbReference>
<dbReference type="SUPFAM" id="SSF51735">
    <property type="entry name" value="NAD(P)-binding Rossmann-fold domains"/>
    <property type="match status" value="1"/>
</dbReference>
<dbReference type="SUPFAM" id="SSF75615">
    <property type="entry name" value="Siroheme synthase middle domains-like"/>
    <property type="match status" value="1"/>
</dbReference>
<dbReference type="SUPFAM" id="SSF53790">
    <property type="entry name" value="Tetrapyrrole methylase"/>
    <property type="match status" value="1"/>
</dbReference>
<dbReference type="PROSITE" id="PS00839">
    <property type="entry name" value="SUMT_1"/>
    <property type="match status" value="1"/>
</dbReference>
<dbReference type="PROSITE" id="PS00840">
    <property type="entry name" value="SUMT_2"/>
    <property type="match status" value="1"/>
</dbReference>
<organism>
    <name type="scientific">Bordetella parapertussis (strain 12822 / ATCC BAA-587 / NCTC 13253)</name>
    <dbReference type="NCBI Taxonomy" id="257311"/>
    <lineage>
        <taxon>Bacteria</taxon>
        <taxon>Pseudomonadati</taxon>
        <taxon>Pseudomonadota</taxon>
        <taxon>Betaproteobacteria</taxon>
        <taxon>Burkholderiales</taxon>
        <taxon>Alcaligenaceae</taxon>
        <taxon>Bordetella</taxon>
    </lineage>
</organism>
<proteinExistence type="inferred from homology"/>
<accession>Q7WB57</accession>
<feature type="chain" id="PRO_0000330498" description="Siroheme synthase">
    <location>
        <begin position="1"/>
        <end position="473"/>
    </location>
</feature>
<feature type="region of interest" description="Precorrin-2 dehydrogenase /sirohydrochlorin ferrochelatase" evidence="1">
    <location>
        <begin position="1"/>
        <end position="203"/>
    </location>
</feature>
<feature type="region of interest" description="Uroporphyrinogen-III C-methyltransferase" evidence="1">
    <location>
        <begin position="216"/>
        <end position="473"/>
    </location>
</feature>
<feature type="active site" description="Proton acceptor" evidence="1">
    <location>
        <position position="248"/>
    </location>
</feature>
<feature type="active site" description="Proton donor" evidence="1">
    <location>
        <position position="270"/>
    </location>
</feature>
<feature type="binding site" evidence="1">
    <location>
        <begin position="22"/>
        <end position="23"/>
    </location>
    <ligand>
        <name>NAD(+)</name>
        <dbReference type="ChEBI" id="CHEBI:57540"/>
    </ligand>
</feature>
<feature type="binding site" evidence="1">
    <location>
        <begin position="43"/>
        <end position="44"/>
    </location>
    <ligand>
        <name>NAD(+)</name>
        <dbReference type="ChEBI" id="CHEBI:57540"/>
    </ligand>
</feature>
<feature type="binding site" evidence="1">
    <location>
        <position position="225"/>
    </location>
    <ligand>
        <name>S-adenosyl-L-methionine</name>
        <dbReference type="ChEBI" id="CHEBI:59789"/>
    </ligand>
</feature>
<feature type="binding site" evidence="1">
    <location>
        <begin position="302"/>
        <end position="304"/>
    </location>
    <ligand>
        <name>S-adenosyl-L-methionine</name>
        <dbReference type="ChEBI" id="CHEBI:59789"/>
    </ligand>
</feature>
<feature type="binding site" evidence="1">
    <location>
        <position position="307"/>
    </location>
    <ligand>
        <name>S-adenosyl-L-methionine</name>
        <dbReference type="ChEBI" id="CHEBI:59789"/>
    </ligand>
</feature>
<feature type="binding site" evidence="1">
    <location>
        <begin position="332"/>
        <end position="333"/>
    </location>
    <ligand>
        <name>S-adenosyl-L-methionine</name>
        <dbReference type="ChEBI" id="CHEBI:59789"/>
    </ligand>
</feature>
<feature type="binding site" evidence="1">
    <location>
        <position position="384"/>
    </location>
    <ligand>
        <name>S-adenosyl-L-methionine</name>
        <dbReference type="ChEBI" id="CHEBI:59789"/>
    </ligand>
</feature>
<feature type="binding site" evidence="1">
    <location>
        <position position="413"/>
    </location>
    <ligand>
        <name>S-adenosyl-L-methionine</name>
        <dbReference type="ChEBI" id="CHEBI:59789"/>
    </ligand>
</feature>
<feature type="modified residue" description="Phosphoserine" evidence="1">
    <location>
        <position position="128"/>
    </location>
</feature>
<name>CYSG_BORPA</name>
<comment type="function">
    <text evidence="1">Multifunctional enzyme that catalyzes the SAM-dependent methylations of uroporphyrinogen III at position C-2 and C-7 to form precorrin-2 via precorrin-1. Then it catalyzes the NAD-dependent ring dehydrogenation of precorrin-2 to yield sirohydrochlorin. Finally, it catalyzes the ferrochelation of sirohydrochlorin to yield siroheme.</text>
</comment>
<comment type="catalytic activity">
    <reaction evidence="1">
        <text>uroporphyrinogen III + 2 S-adenosyl-L-methionine = precorrin-2 + 2 S-adenosyl-L-homocysteine + H(+)</text>
        <dbReference type="Rhea" id="RHEA:32459"/>
        <dbReference type="ChEBI" id="CHEBI:15378"/>
        <dbReference type="ChEBI" id="CHEBI:57308"/>
        <dbReference type="ChEBI" id="CHEBI:57856"/>
        <dbReference type="ChEBI" id="CHEBI:58827"/>
        <dbReference type="ChEBI" id="CHEBI:59789"/>
        <dbReference type="EC" id="2.1.1.107"/>
    </reaction>
</comment>
<comment type="catalytic activity">
    <reaction evidence="1">
        <text>precorrin-2 + NAD(+) = sirohydrochlorin + NADH + 2 H(+)</text>
        <dbReference type="Rhea" id="RHEA:15613"/>
        <dbReference type="ChEBI" id="CHEBI:15378"/>
        <dbReference type="ChEBI" id="CHEBI:57540"/>
        <dbReference type="ChEBI" id="CHEBI:57945"/>
        <dbReference type="ChEBI" id="CHEBI:58351"/>
        <dbReference type="ChEBI" id="CHEBI:58827"/>
        <dbReference type="EC" id="1.3.1.76"/>
    </reaction>
</comment>
<comment type="catalytic activity">
    <reaction evidence="1">
        <text>siroheme + 2 H(+) = sirohydrochlorin + Fe(2+)</text>
        <dbReference type="Rhea" id="RHEA:24360"/>
        <dbReference type="ChEBI" id="CHEBI:15378"/>
        <dbReference type="ChEBI" id="CHEBI:29033"/>
        <dbReference type="ChEBI" id="CHEBI:58351"/>
        <dbReference type="ChEBI" id="CHEBI:60052"/>
        <dbReference type="EC" id="4.99.1.4"/>
    </reaction>
</comment>
<comment type="pathway">
    <text evidence="1">Cofactor biosynthesis; adenosylcobalamin biosynthesis; precorrin-2 from uroporphyrinogen III: step 1/1.</text>
</comment>
<comment type="pathway">
    <text evidence="1">Cofactor biosynthesis; adenosylcobalamin biosynthesis; sirohydrochlorin from precorrin-2: step 1/1.</text>
</comment>
<comment type="pathway">
    <text evidence="1">Porphyrin-containing compound metabolism; siroheme biosynthesis; precorrin-2 from uroporphyrinogen III: step 1/1.</text>
</comment>
<comment type="pathway">
    <text evidence="1">Porphyrin-containing compound metabolism; siroheme biosynthesis; siroheme from sirohydrochlorin: step 1/1.</text>
</comment>
<comment type="pathway">
    <text evidence="1">Porphyrin-containing compound metabolism; siroheme biosynthesis; sirohydrochlorin from precorrin-2: step 1/1.</text>
</comment>
<comment type="similarity">
    <text evidence="1">In the N-terminal section; belongs to the precorrin-2 dehydrogenase / sirohydrochlorin ferrochelatase family.</text>
</comment>
<comment type="similarity">
    <text evidence="1">In the C-terminal section; belongs to the precorrin methyltransferase family.</text>
</comment>